<keyword id="KW-0067">ATP-binding</keyword>
<keyword id="KW-0963">Cytoplasm</keyword>
<keyword id="KW-0227">DNA damage</keyword>
<keyword id="KW-0234">DNA repair</keyword>
<keyword id="KW-0235">DNA replication</keyword>
<keyword id="KW-0238">DNA-binding</keyword>
<keyword id="KW-0547">Nucleotide-binding</keyword>
<keyword id="KW-0742">SOS response</keyword>
<proteinExistence type="inferred from homology"/>
<organism>
    <name type="scientific">Clostridium botulinum (strain Langeland / NCTC 10281 / Type F)</name>
    <dbReference type="NCBI Taxonomy" id="441772"/>
    <lineage>
        <taxon>Bacteria</taxon>
        <taxon>Bacillati</taxon>
        <taxon>Bacillota</taxon>
        <taxon>Clostridia</taxon>
        <taxon>Eubacteriales</taxon>
        <taxon>Clostridiaceae</taxon>
        <taxon>Clostridium</taxon>
    </lineage>
</organism>
<protein>
    <recommendedName>
        <fullName evidence="1">DNA replication and repair protein RecF</fullName>
    </recommendedName>
</protein>
<sequence>MYIKNVHLINFRNYDDMYLELSPNTNIFVGNNAQGKTNILESIYYSSIGKSHRTNKDKDLIKWDKNNTYLRTYVSRERLDKTIDINIFKNGKKAITVNKIKIKKISELMGNLNVVMFSPEDLRIIKDYPGNRRKFLDIELCKINNVYYHDLVQYNKILSERNTALKNWNNKINDIIDIYDEQLSKYGAFIIKERNKYLDKLNIIGKNIHKKITNDLEDINFRYLTNIKDFDNAEKELLIVLKKNRKKDLERNSTSIGPHRDDFEVSINNIDTRIFGSQGQQRTAVLTLKFASLEIIKNIIGEYPVLLLDDVLSELDSNRQKFVLNSIDKIQTIITCTGIEEIDKYLHKKQSQLYLVNNGKIKRV</sequence>
<dbReference type="EMBL" id="CP000728">
    <property type="protein sequence ID" value="ABS42049.1"/>
    <property type="molecule type" value="Genomic_DNA"/>
</dbReference>
<dbReference type="RefSeq" id="WP_011987158.1">
    <property type="nucleotide sequence ID" value="NC_009699.1"/>
</dbReference>
<dbReference type="SMR" id="A7G9B3"/>
<dbReference type="KEGG" id="cbf:CLI_0004"/>
<dbReference type="HOGENOM" id="CLU_040267_0_1_9"/>
<dbReference type="Proteomes" id="UP000002410">
    <property type="component" value="Chromosome"/>
</dbReference>
<dbReference type="GO" id="GO:0005737">
    <property type="term" value="C:cytoplasm"/>
    <property type="evidence" value="ECO:0007669"/>
    <property type="project" value="UniProtKB-SubCell"/>
</dbReference>
<dbReference type="GO" id="GO:0005524">
    <property type="term" value="F:ATP binding"/>
    <property type="evidence" value="ECO:0007669"/>
    <property type="project" value="UniProtKB-UniRule"/>
</dbReference>
<dbReference type="GO" id="GO:0003697">
    <property type="term" value="F:single-stranded DNA binding"/>
    <property type="evidence" value="ECO:0007669"/>
    <property type="project" value="UniProtKB-UniRule"/>
</dbReference>
<dbReference type="GO" id="GO:0006260">
    <property type="term" value="P:DNA replication"/>
    <property type="evidence" value="ECO:0007669"/>
    <property type="project" value="UniProtKB-UniRule"/>
</dbReference>
<dbReference type="GO" id="GO:0000731">
    <property type="term" value="P:DNA synthesis involved in DNA repair"/>
    <property type="evidence" value="ECO:0007669"/>
    <property type="project" value="TreeGrafter"/>
</dbReference>
<dbReference type="GO" id="GO:0006302">
    <property type="term" value="P:double-strand break repair"/>
    <property type="evidence" value="ECO:0007669"/>
    <property type="project" value="TreeGrafter"/>
</dbReference>
<dbReference type="GO" id="GO:0009432">
    <property type="term" value="P:SOS response"/>
    <property type="evidence" value="ECO:0007669"/>
    <property type="project" value="UniProtKB-UniRule"/>
</dbReference>
<dbReference type="CDD" id="cd03242">
    <property type="entry name" value="ABC_RecF"/>
    <property type="match status" value="1"/>
</dbReference>
<dbReference type="Gene3D" id="3.40.50.300">
    <property type="entry name" value="P-loop containing nucleotide triphosphate hydrolases"/>
    <property type="match status" value="1"/>
</dbReference>
<dbReference type="Gene3D" id="1.20.1050.90">
    <property type="entry name" value="RecF/RecN/SMC, N-terminal domain"/>
    <property type="match status" value="1"/>
</dbReference>
<dbReference type="HAMAP" id="MF_00365">
    <property type="entry name" value="RecF"/>
    <property type="match status" value="1"/>
</dbReference>
<dbReference type="InterPro" id="IPR001238">
    <property type="entry name" value="DNA-binding_RecF"/>
</dbReference>
<dbReference type="InterPro" id="IPR018078">
    <property type="entry name" value="DNA-binding_RecF_CS"/>
</dbReference>
<dbReference type="InterPro" id="IPR027417">
    <property type="entry name" value="P-loop_NTPase"/>
</dbReference>
<dbReference type="InterPro" id="IPR003395">
    <property type="entry name" value="RecF/RecN/SMC_N"/>
</dbReference>
<dbReference type="InterPro" id="IPR042174">
    <property type="entry name" value="RecF_2"/>
</dbReference>
<dbReference type="NCBIfam" id="TIGR00611">
    <property type="entry name" value="recf"/>
    <property type="match status" value="1"/>
</dbReference>
<dbReference type="PANTHER" id="PTHR32182">
    <property type="entry name" value="DNA REPLICATION AND REPAIR PROTEIN RECF"/>
    <property type="match status" value="1"/>
</dbReference>
<dbReference type="PANTHER" id="PTHR32182:SF0">
    <property type="entry name" value="DNA REPLICATION AND REPAIR PROTEIN RECF"/>
    <property type="match status" value="1"/>
</dbReference>
<dbReference type="Pfam" id="PF02463">
    <property type="entry name" value="SMC_N"/>
    <property type="match status" value="1"/>
</dbReference>
<dbReference type="SUPFAM" id="SSF52540">
    <property type="entry name" value="P-loop containing nucleoside triphosphate hydrolases"/>
    <property type="match status" value="1"/>
</dbReference>
<dbReference type="PROSITE" id="PS00618">
    <property type="entry name" value="RECF_2"/>
    <property type="match status" value="1"/>
</dbReference>
<gene>
    <name evidence="1" type="primary">recF</name>
    <name type="ordered locus">CLI_0004</name>
</gene>
<reference key="1">
    <citation type="submission" date="2007-06" db="EMBL/GenBank/DDBJ databases">
        <authorList>
            <person name="Brinkac L.M."/>
            <person name="Daugherty S."/>
            <person name="Dodson R.J."/>
            <person name="Madupu R."/>
            <person name="Brown J.L."/>
            <person name="Bruce D."/>
            <person name="Detter C."/>
            <person name="Munk C."/>
            <person name="Smith L.A."/>
            <person name="Smith T.J."/>
            <person name="White O."/>
            <person name="Brettin T.S."/>
        </authorList>
    </citation>
    <scope>NUCLEOTIDE SEQUENCE [LARGE SCALE GENOMIC DNA]</scope>
    <source>
        <strain>Langeland / NCTC 10281 / Type F</strain>
    </source>
</reference>
<comment type="function">
    <text evidence="1">The RecF protein is involved in DNA metabolism; it is required for DNA replication and normal SOS inducibility. RecF binds preferentially to single-stranded, linear DNA. It also seems to bind ATP.</text>
</comment>
<comment type="subcellular location">
    <subcellularLocation>
        <location evidence="1">Cytoplasm</location>
    </subcellularLocation>
</comment>
<comment type="similarity">
    <text evidence="1">Belongs to the RecF family.</text>
</comment>
<feature type="chain" id="PRO_1000048511" description="DNA replication and repair protein RecF">
    <location>
        <begin position="1"/>
        <end position="364"/>
    </location>
</feature>
<feature type="binding site" evidence="1">
    <location>
        <begin position="30"/>
        <end position="37"/>
    </location>
    <ligand>
        <name>ATP</name>
        <dbReference type="ChEBI" id="CHEBI:30616"/>
    </ligand>
</feature>
<name>RECF_CLOBL</name>
<accession>A7G9B3</accession>
<evidence type="ECO:0000255" key="1">
    <source>
        <dbReference type="HAMAP-Rule" id="MF_00365"/>
    </source>
</evidence>